<gene>
    <name evidence="7 8" type="primary">shyB</name>
    <name evidence="7 11" type="ordered locus">VC_0503</name>
</gene>
<comment type="function">
    <text evidence="5">Cell wall peptidoglycan (PG) DD-endopeptidase, which may act as a substitute for other zinc-dependent PG endopeptidases (ShyA and ShyC) during zinc starvation. Hydrolyzes peptide cross-links which covalently connect adjacent PG strands probably to allow insertion of new glycans and thus cell wall expansion. Degrades purified whole PG sacculi in vitro. It is unclear how it is able to function in low zinc environments, but that may possibly be due to binding zinc with very high affinity, utilizing an alternative metal cofactor or that it may function independently of a bound metal cofactor.</text>
</comment>
<comment type="cofactor">
    <cofactor evidence="3">
        <name>Zn(2+)</name>
        <dbReference type="ChEBI" id="CHEBI:29105"/>
    </cofactor>
    <text evidence="3">Binds 1 zinc ion per subunit.</text>
</comment>
<comment type="activity regulation">
    <text evidence="5">Not inhibited by metal chelator EDTA.</text>
</comment>
<comment type="pathway">
    <text evidence="5">Cell wall degradation; peptidoglycan degradation.</text>
</comment>
<comment type="subunit">
    <text evidence="3">Monomer.</text>
</comment>
<comment type="subcellular location">
    <subcellularLocation>
        <location evidence="10">Periplasm</location>
    </subcellularLocation>
</comment>
<comment type="induction">
    <text evidence="5">Induced by TPEN (N,N,N',N'-tetrakis(2-pyridylmethyl)ethylenediamine), a cell-permeable metal chelator with high affinity for zinc (at protein level). No expression under standard laboratory conditions (LB medium), but is expressed in minimal medium. Expression is induced by zinc starvation. Transcription is repressed by Zur in high zinc availability conditions.</text>
</comment>
<comment type="disruption phenotype">
    <text evidence="4 5">Grows as wild-type in LB medium (PubMed:23834664). Simultaneous deletion of shyA results in significant growth defect in minimal medium, but no growth or shape defect in LB medium (PubMed:23834664). ShyAB double mutant does not grow in minimal medium treated with TPEN (N,N,N',N'-tetrakis(2-pyridylmethyl)ethylenediamine), a cell-permeable metal chelator with high affinity for zinc, and cells appear aberrantly thick and long (PubMed:30782657). ShyB shyC double deletion mutant has no growth or shape defect in LB medium (PubMed:23834664).</text>
</comment>
<comment type="similarity">
    <text evidence="9">Belongs to the peptidase M23B family.</text>
</comment>
<accession>Q9KUL5</accession>
<name>SHYB_VIBCH</name>
<keyword id="KW-0002">3D-structure</keyword>
<keyword id="KW-0961">Cell wall biogenesis/degradation</keyword>
<keyword id="KW-0378">Hydrolase</keyword>
<keyword id="KW-0479">Metal-binding</keyword>
<keyword id="KW-0482">Metalloprotease</keyword>
<keyword id="KW-0574">Periplasm</keyword>
<keyword id="KW-0645">Protease</keyword>
<keyword id="KW-1185">Reference proteome</keyword>
<keyword id="KW-0732">Signal</keyword>
<keyword id="KW-0862">Zinc</keyword>
<dbReference type="EC" id="3.4.24.-" evidence="5"/>
<dbReference type="EMBL" id="AE003852">
    <property type="protein sequence ID" value="AAF93673.1"/>
    <property type="molecule type" value="Genomic_DNA"/>
</dbReference>
<dbReference type="PIR" id="F82315">
    <property type="entry name" value="F82315"/>
</dbReference>
<dbReference type="RefSeq" id="NP_230154.1">
    <property type="nucleotide sequence ID" value="NC_002505.1"/>
</dbReference>
<dbReference type="RefSeq" id="WP_001883323.1">
    <property type="nucleotide sequence ID" value="NZ_LT906614.1"/>
</dbReference>
<dbReference type="PDB" id="2GU1">
    <property type="method" value="X-ray"/>
    <property type="resolution" value="1.90 A"/>
    <property type="chains" value="A=63-412"/>
</dbReference>
<dbReference type="PDBsum" id="2GU1"/>
<dbReference type="SMR" id="Q9KUL5"/>
<dbReference type="STRING" id="243277.VC_0503"/>
<dbReference type="MEROPS" id="M23.011"/>
<dbReference type="DNASU" id="2615795"/>
<dbReference type="EnsemblBacteria" id="AAF93673">
    <property type="protein sequence ID" value="AAF93673"/>
    <property type="gene ID" value="VC_0503"/>
</dbReference>
<dbReference type="KEGG" id="vch:VC_0503"/>
<dbReference type="PATRIC" id="fig|243277.26.peg.477"/>
<dbReference type="eggNOG" id="COG0739">
    <property type="taxonomic scope" value="Bacteria"/>
</dbReference>
<dbReference type="eggNOG" id="COG1388">
    <property type="taxonomic scope" value="Bacteria"/>
</dbReference>
<dbReference type="HOGENOM" id="CLU_026846_0_0_6"/>
<dbReference type="UniPathway" id="UPA00549"/>
<dbReference type="EvolutionaryTrace" id="Q9KUL5"/>
<dbReference type="Proteomes" id="UP000000584">
    <property type="component" value="Chromosome 1"/>
</dbReference>
<dbReference type="GO" id="GO:0042597">
    <property type="term" value="C:periplasmic space"/>
    <property type="evidence" value="ECO:0007669"/>
    <property type="project" value="UniProtKB-SubCell"/>
</dbReference>
<dbReference type="GO" id="GO:0005886">
    <property type="term" value="C:plasma membrane"/>
    <property type="evidence" value="ECO:0007669"/>
    <property type="project" value="UniProtKB-KW"/>
</dbReference>
<dbReference type="GO" id="GO:0046872">
    <property type="term" value="F:metal ion binding"/>
    <property type="evidence" value="ECO:0007669"/>
    <property type="project" value="UniProtKB-KW"/>
</dbReference>
<dbReference type="GO" id="GO:0004222">
    <property type="term" value="F:metalloendopeptidase activity"/>
    <property type="evidence" value="ECO:0000318"/>
    <property type="project" value="GO_Central"/>
</dbReference>
<dbReference type="GO" id="GO:0042834">
    <property type="term" value="F:peptidoglycan binding"/>
    <property type="evidence" value="ECO:0007669"/>
    <property type="project" value="InterPro"/>
</dbReference>
<dbReference type="CDD" id="cd12797">
    <property type="entry name" value="M23_peptidase"/>
    <property type="match status" value="1"/>
</dbReference>
<dbReference type="FunFam" id="2.70.70.10:FF:000002">
    <property type="entry name" value="Murein DD-endopeptidase MepM"/>
    <property type="match status" value="1"/>
</dbReference>
<dbReference type="Gene3D" id="3.10.450.350">
    <property type="match status" value="2"/>
</dbReference>
<dbReference type="Gene3D" id="2.70.70.10">
    <property type="entry name" value="Glucose Permease (Domain IIA)"/>
    <property type="match status" value="1"/>
</dbReference>
<dbReference type="InterPro" id="IPR050570">
    <property type="entry name" value="Cell_wall_metabolism_enzyme"/>
</dbReference>
<dbReference type="InterPro" id="IPR045834">
    <property type="entry name" value="Csd3_N2"/>
</dbReference>
<dbReference type="InterPro" id="IPR011055">
    <property type="entry name" value="Dup_hybrid_motif"/>
</dbReference>
<dbReference type="InterPro" id="IPR007340">
    <property type="entry name" value="LysM_Opacity-associatedA"/>
</dbReference>
<dbReference type="InterPro" id="IPR016047">
    <property type="entry name" value="Peptidase_M23"/>
</dbReference>
<dbReference type="PANTHER" id="PTHR21666:SF292">
    <property type="entry name" value="MUREIN DD-ENDOPEPTIDASE MEPM"/>
    <property type="match status" value="1"/>
</dbReference>
<dbReference type="PANTHER" id="PTHR21666">
    <property type="entry name" value="PEPTIDASE-RELATED"/>
    <property type="match status" value="1"/>
</dbReference>
<dbReference type="Pfam" id="PF19425">
    <property type="entry name" value="Csd3_N2"/>
    <property type="match status" value="1"/>
</dbReference>
<dbReference type="Pfam" id="PF04225">
    <property type="entry name" value="LysM_OapA"/>
    <property type="match status" value="1"/>
</dbReference>
<dbReference type="Pfam" id="PF01551">
    <property type="entry name" value="Peptidase_M23"/>
    <property type="match status" value="1"/>
</dbReference>
<dbReference type="SUPFAM" id="SSF51261">
    <property type="entry name" value="Duplicated hybrid motif"/>
    <property type="match status" value="1"/>
</dbReference>
<proteinExistence type="evidence at protein level"/>
<organism evidence="11 12">
    <name type="scientific">Vibrio cholerae serotype O1 (strain ATCC 39315 / El Tor Inaba N16961)</name>
    <dbReference type="NCBI Taxonomy" id="243277"/>
    <lineage>
        <taxon>Bacteria</taxon>
        <taxon>Pseudomonadati</taxon>
        <taxon>Pseudomonadota</taxon>
        <taxon>Gammaproteobacteria</taxon>
        <taxon>Vibrionales</taxon>
        <taxon>Vibrionaceae</taxon>
        <taxon>Vibrio</taxon>
    </lineage>
</organism>
<evidence type="ECO:0000255" key="1"/>
<evidence type="ECO:0000256" key="2">
    <source>
        <dbReference type="SAM" id="MobiDB-lite"/>
    </source>
</evidence>
<evidence type="ECO:0000269" key="3">
    <source>
    </source>
</evidence>
<evidence type="ECO:0000269" key="4">
    <source>
    </source>
</evidence>
<evidence type="ECO:0000269" key="5">
    <source>
    </source>
</evidence>
<evidence type="ECO:0000303" key="6">
    <source>
    </source>
</evidence>
<evidence type="ECO:0000303" key="7">
    <source>
    </source>
</evidence>
<evidence type="ECO:0000303" key="8">
    <source>
    </source>
</evidence>
<evidence type="ECO:0000305" key="9"/>
<evidence type="ECO:0000305" key="10">
    <source>
    </source>
</evidence>
<evidence type="ECO:0000312" key="11">
    <source>
        <dbReference type="EMBL" id="AAF93673.1"/>
    </source>
</evidence>
<evidence type="ECO:0000312" key="12">
    <source>
        <dbReference type="Proteomes" id="UP000000584"/>
    </source>
</evidence>
<evidence type="ECO:0007744" key="13">
    <source>
        <dbReference type="PDB" id="2GU1"/>
    </source>
</evidence>
<protein>
    <recommendedName>
        <fullName evidence="8">Peptidoglycan DD-endopeptidase ShyB</fullName>
        <ecNumber evidence="5">3.4.24.-</ecNumber>
    </recommendedName>
    <alternativeName>
        <fullName evidence="8">Autolysin ShyB</fullName>
    </alternativeName>
    <alternativeName>
        <fullName evidence="6">Putative lysostaphin-type peptidase P01</fullName>
    </alternativeName>
    <alternativeName>
        <fullName evidence="7">Sidewall hydrolase B</fullName>
    </alternativeName>
</protein>
<feature type="signal peptide" evidence="1">
    <location>
        <begin position="1"/>
        <end position="21"/>
    </location>
</feature>
<feature type="chain" id="PRO_5004328575" description="Peptidoglycan DD-endopeptidase ShyB" evidence="1">
    <location>
        <begin position="22"/>
        <end position="426"/>
    </location>
</feature>
<feature type="region of interest" description="Disordered" evidence="2">
    <location>
        <begin position="32"/>
        <end position="55"/>
    </location>
</feature>
<feature type="compositionally biased region" description="Polar residues" evidence="2">
    <location>
        <begin position="32"/>
        <end position="48"/>
    </location>
</feature>
<feature type="binding site" evidence="3 13">
    <location>
        <position position="291"/>
    </location>
    <ligand>
        <name>Zn(2+)</name>
        <dbReference type="ChEBI" id="CHEBI:29105"/>
        <note>catalytic</note>
    </ligand>
</feature>
<feature type="binding site" evidence="3 13">
    <location>
        <position position="295"/>
    </location>
    <ligand>
        <name>Zn(2+)</name>
        <dbReference type="ChEBI" id="CHEBI:29105"/>
        <note>catalytic</note>
    </ligand>
</feature>
<feature type="binding site" evidence="3 13">
    <location>
        <position position="372"/>
    </location>
    <ligand>
        <name>Zn(2+)</name>
        <dbReference type="ChEBI" id="CHEBI:29105"/>
        <note>catalytic</note>
    </ligand>
</feature>
<feature type="mutagenesis site" description="Loss of catalytic activity." evidence="5">
    <original>H</original>
    <variation>A</variation>
    <location>
        <position position="372"/>
    </location>
</feature>
<reference evidence="11 12" key="1">
    <citation type="journal article" date="2000" name="Nature">
        <title>DNA sequence of both chromosomes of the cholera pathogen Vibrio cholerae.</title>
        <authorList>
            <person name="Heidelberg J.F."/>
            <person name="Eisen J.A."/>
            <person name="Nelson W.C."/>
            <person name="Clayton R.A."/>
            <person name="Gwinn M.L."/>
            <person name="Dodson R.J."/>
            <person name="Haft D.H."/>
            <person name="Hickey E.K."/>
            <person name="Peterson J.D."/>
            <person name="Umayam L.A."/>
            <person name="Gill S.R."/>
            <person name="Nelson K.E."/>
            <person name="Read T.D."/>
            <person name="Tettelin H."/>
            <person name="Richardson D.L."/>
            <person name="Ermolaeva M.D."/>
            <person name="Vamathevan J.J."/>
            <person name="Bass S."/>
            <person name="Qin H."/>
            <person name="Dragoi I."/>
            <person name="Sellers P."/>
            <person name="McDonald L.A."/>
            <person name="Utterback T.R."/>
            <person name="Fleischmann R.D."/>
            <person name="Nierman W.C."/>
            <person name="White O."/>
            <person name="Salzberg S.L."/>
            <person name="Smith H.O."/>
            <person name="Colwell R.R."/>
            <person name="Mekalanos J.J."/>
            <person name="Venter J.C."/>
            <person name="Fraser C.M."/>
        </authorList>
    </citation>
    <scope>NUCLEOTIDE SEQUENCE [LARGE SCALE GENOMIC DNA]</scope>
    <source>
        <strain evidence="12">ATCC 39315 / El Tor Inaba N16961</strain>
    </source>
</reference>
<reference key="2">
    <citation type="journal article" date="2013" name="Mol. Microbiol.">
        <title>Substrate specificity of an elongation-specific peptidoglycan endopeptidase and its implications for cell wall architecture and growth of Vibrio cholerae.</title>
        <authorList>
            <person name="Doerr T."/>
            <person name="Cava F."/>
            <person name="Lam H."/>
            <person name="Davis B.M."/>
            <person name="Waldor M.K."/>
        </authorList>
    </citation>
    <scope>SUBCELLULAR LOCATION</scope>
    <scope>DISRUPTION PHENOTYPE</scope>
    <source>
        <strain evidence="7">ATCC 39315 / El Tor Inaba N16961</strain>
    </source>
</reference>
<reference key="3">
    <citation type="journal article" date="2019" name="MBio">
        <title>Endopeptidase Regulation as a Novel Function of the Zur-Dependent Zinc Starvation Response.</title>
        <authorList>
            <person name="Murphy S.G."/>
            <person name="Alvarez L."/>
            <person name="Adams M.C."/>
            <person name="Liu S."/>
            <person name="Chappie J.S."/>
            <person name="Cava F."/>
            <person name="Doerr T."/>
        </authorList>
    </citation>
    <scope>FUNCTION</scope>
    <scope>CATALYTIC ACTIVITY</scope>
    <scope>ACTIVITY REGULATION</scope>
    <scope>PATHWAY</scope>
    <scope>INDUCTION</scope>
    <scope>DISRUPTION PHENOTYPE</scope>
    <scope>MUTAGENESIS OF HIS-372</scope>
    <source>
        <strain evidence="8">ATCC 39315 / El Tor Inaba N16961</strain>
    </source>
</reference>
<reference evidence="13" key="4">
    <citation type="journal article" date="2008" name="Proteins">
        <title>Crystal structure of a putative lysostaphin peptidase from Vibrio cholerae.</title>
        <authorList>
            <person name="Ragumani S."/>
            <person name="Kumaran D."/>
            <person name="Burley S.K."/>
            <person name="Swaminathan S."/>
        </authorList>
    </citation>
    <scope>X-RAY CRYSTALLOGRAPHY (1.90 ANGSTROMS) OF 63-412 IN COMPLEX WITH ZINC</scope>
    <scope>COFACTOR</scope>
    <scope>SUBUNIT</scope>
    <scope>REACTION MECHANISM</scope>
</reference>
<sequence length="426" mass="47548">MGQFRFLALIVAVLCFSVALFLPTADEPDQDSYSVPLNQSVNTSQPPSSEMVPSDIRLTPLPQPKRIHYMVKVGDTLSGIFAQLGVPYSILQKILSVDLDHLQLDMIQPGEELELMMDDMGQLSRLIYHMSIVEKAIYTRENDGSFSYDFQEISGEWREILFSGEINGSFSVSARRVGLTSSQVANITQVMKDKIDFSRSLRAGDRFDILVKQQYLGEHNTGNSEIKAISFKLAKGDVSAFLAEDGRFYDRAGNSLERAFNRYPVDKAYRQITSGFNPKRKHPVTGRVVPHNGTDFATPIGAPVYSTGDGKVIVVRKHPYAGNYLVIEHNSVYKTRYLHLDKILVKKGQLVKRGQKIALAGATGRLTGPHLHFEVLVRNRPVDAMKADLPIAKSLSSNQKTSFLARVSEFDHLVQANQQEVALDET</sequence>